<dbReference type="EC" id="1.1.1.205" evidence="1"/>
<dbReference type="EMBL" id="Z46729">
    <property type="protein sequence ID" value="CAA86719.1"/>
    <property type="molecule type" value="Genomic_DNA"/>
</dbReference>
<dbReference type="EMBL" id="AY899250">
    <property type="protein sequence ID" value="AAX83935.1"/>
    <property type="molecule type" value="mRNA"/>
</dbReference>
<dbReference type="EMBL" id="BK006946">
    <property type="protein sequence ID" value="DAA09842.1"/>
    <property type="molecule type" value="Genomic_DNA"/>
</dbReference>
<dbReference type="PIR" id="S50890">
    <property type="entry name" value="S50890"/>
</dbReference>
<dbReference type="RefSeq" id="NP_013656.1">
    <property type="nucleotide sequence ID" value="NM_001182414.1"/>
</dbReference>
<dbReference type="SMR" id="P50094"/>
<dbReference type="BioGRID" id="35111">
    <property type="interactions" value="165"/>
</dbReference>
<dbReference type="DIP" id="DIP-6458N"/>
<dbReference type="FunCoup" id="P50094">
    <property type="interactions" value="1066"/>
</dbReference>
<dbReference type="IntAct" id="P50094">
    <property type="interactions" value="73"/>
</dbReference>
<dbReference type="MINT" id="P50094"/>
<dbReference type="STRING" id="4932.YML056C"/>
<dbReference type="iPTMnet" id="P50094"/>
<dbReference type="PaxDb" id="4932-YML056C"/>
<dbReference type="PeptideAtlas" id="P50094"/>
<dbReference type="EnsemblFungi" id="YML056C_mRNA">
    <property type="protein sequence ID" value="YML056C"/>
    <property type="gene ID" value="YML056C"/>
</dbReference>
<dbReference type="GeneID" id="854948"/>
<dbReference type="KEGG" id="sce:YML056C"/>
<dbReference type="AGR" id="SGD:S000004520"/>
<dbReference type="SGD" id="S000004520">
    <property type="gene designation" value="IMD4"/>
</dbReference>
<dbReference type="VEuPathDB" id="FungiDB:YML056C"/>
<dbReference type="eggNOG" id="KOG2550">
    <property type="taxonomic scope" value="Eukaryota"/>
</dbReference>
<dbReference type="GeneTree" id="ENSGT00940000170207"/>
<dbReference type="HOGENOM" id="CLU_022552_2_1_1"/>
<dbReference type="InParanoid" id="P50094"/>
<dbReference type="OMA" id="NCPPDEQ"/>
<dbReference type="OrthoDB" id="416622at2759"/>
<dbReference type="BioCyc" id="YEAST:YML056C-MONOMER"/>
<dbReference type="Reactome" id="R-SCE-6798695">
    <property type="pathway name" value="Neutrophil degranulation"/>
</dbReference>
<dbReference type="Reactome" id="R-SCE-73817">
    <property type="pathway name" value="Purine ribonucleoside monophosphate biosynthesis"/>
</dbReference>
<dbReference type="Reactome" id="R-SCE-9748787">
    <property type="pathway name" value="Azathioprine ADME"/>
</dbReference>
<dbReference type="UniPathway" id="UPA00601">
    <property type="reaction ID" value="UER00295"/>
</dbReference>
<dbReference type="BioGRID-ORCS" id="854948">
    <property type="hits" value="2 hits in 10 CRISPR screens"/>
</dbReference>
<dbReference type="PRO" id="PR:P50094"/>
<dbReference type="Proteomes" id="UP000002311">
    <property type="component" value="Chromosome XIII"/>
</dbReference>
<dbReference type="RNAct" id="P50094">
    <property type="molecule type" value="protein"/>
</dbReference>
<dbReference type="GO" id="GO:0005737">
    <property type="term" value="C:cytoplasm"/>
    <property type="evidence" value="ECO:0000314"/>
    <property type="project" value="SGD"/>
</dbReference>
<dbReference type="GO" id="GO:0003938">
    <property type="term" value="F:IMP dehydrogenase activity"/>
    <property type="evidence" value="ECO:0000318"/>
    <property type="project" value="GO_Central"/>
</dbReference>
<dbReference type="GO" id="GO:0046872">
    <property type="term" value="F:metal ion binding"/>
    <property type="evidence" value="ECO:0007669"/>
    <property type="project" value="UniProtKB-UniRule"/>
</dbReference>
<dbReference type="GO" id="GO:0003729">
    <property type="term" value="F:mRNA binding"/>
    <property type="evidence" value="ECO:0007005"/>
    <property type="project" value="SGD"/>
</dbReference>
<dbReference type="GO" id="GO:0000166">
    <property type="term" value="F:nucleotide binding"/>
    <property type="evidence" value="ECO:0007669"/>
    <property type="project" value="UniProtKB-UniRule"/>
</dbReference>
<dbReference type="GO" id="GO:0006177">
    <property type="term" value="P:GMP biosynthetic process"/>
    <property type="evidence" value="ECO:0007669"/>
    <property type="project" value="UniProtKB-UniRule"/>
</dbReference>
<dbReference type="GO" id="GO:0006183">
    <property type="term" value="P:GTP biosynthetic process"/>
    <property type="evidence" value="ECO:0000318"/>
    <property type="project" value="GO_Central"/>
</dbReference>
<dbReference type="CDD" id="cd04601">
    <property type="entry name" value="CBS_pair_IMPDH"/>
    <property type="match status" value="1"/>
</dbReference>
<dbReference type="CDD" id="cd00381">
    <property type="entry name" value="IMPDH"/>
    <property type="match status" value="1"/>
</dbReference>
<dbReference type="FunFam" id="3.20.20.70:FF:000007">
    <property type="entry name" value="Chromosome 19 SCAF14664, whole genome shotgun sequence"/>
    <property type="match status" value="1"/>
</dbReference>
<dbReference type="Gene3D" id="3.20.20.70">
    <property type="entry name" value="Aldolase class I"/>
    <property type="match status" value="1"/>
</dbReference>
<dbReference type="HAMAP" id="MF_01964">
    <property type="entry name" value="IMPDH"/>
    <property type="match status" value="1"/>
</dbReference>
<dbReference type="InterPro" id="IPR013785">
    <property type="entry name" value="Aldolase_TIM"/>
</dbReference>
<dbReference type="InterPro" id="IPR000644">
    <property type="entry name" value="CBS_dom"/>
</dbReference>
<dbReference type="InterPro" id="IPR046342">
    <property type="entry name" value="CBS_dom_sf"/>
</dbReference>
<dbReference type="InterPro" id="IPR005990">
    <property type="entry name" value="IMP_DH"/>
</dbReference>
<dbReference type="InterPro" id="IPR015875">
    <property type="entry name" value="IMP_DH/GMP_Rdtase_CS"/>
</dbReference>
<dbReference type="InterPro" id="IPR001093">
    <property type="entry name" value="IMP_DH_GMPRt"/>
</dbReference>
<dbReference type="NCBIfam" id="TIGR01302">
    <property type="entry name" value="IMP_dehydrog"/>
    <property type="match status" value="1"/>
</dbReference>
<dbReference type="PANTHER" id="PTHR11911:SF111">
    <property type="entry name" value="INOSINE-5'-MONOPHOSPHATE DEHYDROGENASE"/>
    <property type="match status" value="1"/>
</dbReference>
<dbReference type="PANTHER" id="PTHR11911">
    <property type="entry name" value="INOSINE-5-MONOPHOSPHATE DEHYDROGENASE RELATED"/>
    <property type="match status" value="1"/>
</dbReference>
<dbReference type="Pfam" id="PF00571">
    <property type="entry name" value="CBS"/>
    <property type="match status" value="2"/>
</dbReference>
<dbReference type="Pfam" id="PF00478">
    <property type="entry name" value="IMPDH"/>
    <property type="match status" value="1"/>
</dbReference>
<dbReference type="PIRSF" id="PIRSF000130">
    <property type="entry name" value="IMPDH"/>
    <property type="match status" value="1"/>
</dbReference>
<dbReference type="SMART" id="SM00116">
    <property type="entry name" value="CBS"/>
    <property type="match status" value="2"/>
</dbReference>
<dbReference type="SMART" id="SM01240">
    <property type="entry name" value="IMPDH"/>
    <property type="match status" value="1"/>
</dbReference>
<dbReference type="SUPFAM" id="SSF54631">
    <property type="entry name" value="CBS-domain pair"/>
    <property type="match status" value="1"/>
</dbReference>
<dbReference type="SUPFAM" id="SSF51412">
    <property type="entry name" value="Inosine monophosphate dehydrogenase (IMPDH)"/>
    <property type="match status" value="1"/>
</dbReference>
<dbReference type="PROSITE" id="PS51371">
    <property type="entry name" value="CBS"/>
    <property type="match status" value="2"/>
</dbReference>
<dbReference type="PROSITE" id="PS00487">
    <property type="entry name" value="IMP_DH_GMP_RED"/>
    <property type="match status" value="1"/>
</dbReference>
<gene>
    <name evidence="1" type="primary">IMD4</name>
    <name type="ordered locus">YML056C</name>
    <name type="ORF">YM9958.06C</name>
</gene>
<organism>
    <name type="scientific">Saccharomyces cerevisiae (strain ATCC 204508 / S288c)</name>
    <name type="common">Baker's yeast</name>
    <dbReference type="NCBI Taxonomy" id="559292"/>
    <lineage>
        <taxon>Eukaryota</taxon>
        <taxon>Fungi</taxon>
        <taxon>Dikarya</taxon>
        <taxon>Ascomycota</taxon>
        <taxon>Saccharomycotina</taxon>
        <taxon>Saccharomycetes</taxon>
        <taxon>Saccharomycetales</taxon>
        <taxon>Saccharomycetaceae</taxon>
        <taxon>Saccharomyces</taxon>
    </lineage>
</organism>
<sequence>MSAAPLDYKKALEHLKTYSSKDGLSVQELMDSTTRGGLTYNDFLVLPGLVNFPSSAVSLQTKLTKKITLNTPFVSSPMDTVTEADMAIYMALLGGIGFIHHNCTPKEQASMVKKVKMFENGFINSPIVISPTTTVGEVKVMKRKFGFSGFPVTEDGKCPGKLVGLVTSRDIQFLEDDSLVVSEVMTKNPVTGIKGITLKEGNEILKQTKKGKLLIVDDNGNLVSMLSRADLMKNQNYPLASKSATTKQLLCGAAIGTIEADKERLRLLVEAGLDVVILDSSQGNSVFQLNMIKWIKETFPDLEIIAGNVATREQAANLIAAGADGLRIGMGSGSICITQEVMACGRPQGTAVYNVCQFANQFGVPCMADGGVQNIGHITKALALGSSTVMMGGMLAGTTESPGEYFYKDGKRLKAYRGMGSIDAMQKTGNKGNASTSRYFSESDSVLVAQGVSGAVVDKGSIKKFIPYLYNGLQHSCQDIGCESLTSLKENVQNGEVRFEFRTASAQLEGGVHNLHSYEKRLYN</sequence>
<evidence type="ECO:0000255" key="1">
    <source>
        <dbReference type="HAMAP-Rule" id="MF_03156"/>
    </source>
</evidence>
<evidence type="ECO:0000269" key="2">
    <source>
    </source>
</evidence>
<evidence type="ECO:0000269" key="3">
    <source>
    </source>
</evidence>
<evidence type="ECO:0000269" key="4">
    <source>
    </source>
</evidence>
<evidence type="ECO:0000269" key="5">
    <source>
    </source>
</evidence>
<evidence type="ECO:0007744" key="6">
    <source>
    </source>
</evidence>
<feature type="chain" id="PRO_0000093684" description="Inosine-5'-monophosphate dehydrogenase 4">
    <location>
        <begin position="1"/>
        <end position="524"/>
    </location>
</feature>
<feature type="domain" description="CBS 1" evidence="1">
    <location>
        <begin position="122"/>
        <end position="183"/>
    </location>
</feature>
<feature type="domain" description="CBS 2" evidence="1">
    <location>
        <begin position="185"/>
        <end position="241"/>
    </location>
</feature>
<feature type="active site" description="Thioimidate intermediate" evidence="1">
    <location>
        <position position="336"/>
    </location>
</feature>
<feature type="active site" description="Proton acceptor" evidence="1">
    <location>
        <position position="438"/>
    </location>
</feature>
<feature type="binding site" evidence="1">
    <location>
        <begin position="279"/>
        <end position="281"/>
    </location>
    <ligand>
        <name>NAD(+)</name>
        <dbReference type="ChEBI" id="CHEBI:57540"/>
    </ligand>
</feature>
<feature type="binding site" evidence="1">
    <location>
        <begin position="329"/>
        <end position="331"/>
    </location>
    <ligand>
        <name>NAD(+)</name>
        <dbReference type="ChEBI" id="CHEBI:57540"/>
    </ligand>
</feature>
<feature type="binding site" description="in other chain" evidence="1">
    <location>
        <position position="331"/>
    </location>
    <ligand>
        <name>K(+)</name>
        <dbReference type="ChEBI" id="CHEBI:29103"/>
        <note>ligand shared between two tetrameric partners</note>
    </ligand>
</feature>
<feature type="binding site" description="in other chain" evidence="1">
    <location>
        <position position="333"/>
    </location>
    <ligand>
        <name>K(+)</name>
        <dbReference type="ChEBI" id="CHEBI:29103"/>
        <note>ligand shared between two tetrameric partners</note>
    </ligand>
</feature>
<feature type="binding site" evidence="1">
    <location>
        <position position="334"/>
    </location>
    <ligand>
        <name>IMP</name>
        <dbReference type="ChEBI" id="CHEBI:58053"/>
    </ligand>
</feature>
<feature type="binding site" description="in other chain" evidence="1">
    <location>
        <position position="336"/>
    </location>
    <ligand>
        <name>K(+)</name>
        <dbReference type="ChEBI" id="CHEBI:29103"/>
        <note>ligand shared between two tetrameric partners</note>
    </ligand>
</feature>
<feature type="binding site" evidence="1">
    <location>
        <begin position="369"/>
        <end position="371"/>
    </location>
    <ligand>
        <name>IMP</name>
        <dbReference type="ChEBI" id="CHEBI:58053"/>
    </ligand>
</feature>
<feature type="binding site" evidence="1">
    <location>
        <begin position="392"/>
        <end position="393"/>
    </location>
    <ligand>
        <name>IMP</name>
        <dbReference type="ChEBI" id="CHEBI:58053"/>
    </ligand>
</feature>
<feature type="binding site" evidence="1">
    <location>
        <begin position="416"/>
        <end position="420"/>
    </location>
    <ligand>
        <name>IMP</name>
        <dbReference type="ChEBI" id="CHEBI:58053"/>
    </ligand>
</feature>
<feature type="binding site" evidence="1">
    <location>
        <position position="450"/>
    </location>
    <ligand>
        <name>IMP</name>
        <dbReference type="ChEBI" id="CHEBI:58053"/>
    </ligand>
</feature>
<feature type="binding site" evidence="1">
    <location>
        <position position="509"/>
    </location>
    <ligand>
        <name>K(+)</name>
        <dbReference type="ChEBI" id="CHEBI:29103"/>
        <note>ligand shared between two tetrameric partners</note>
    </ligand>
</feature>
<feature type="binding site" evidence="1">
    <location>
        <position position="510"/>
    </location>
    <ligand>
        <name>K(+)</name>
        <dbReference type="ChEBI" id="CHEBI:29103"/>
        <note>ligand shared between two tetrameric partners</note>
    </ligand>
</feature>
<feature type="binding site" evidence="1">
    <location>
        <position position="511"/>
    </location>
    <ligand>
        <name>K(+)</name>
        <dbReference type="ChEBI" id="CHEBI:29103"/>
        <note>ligand shared between two tetrameric partners</note>
    </ligand>
</feature>
<feature type="modified residue" description="Phosphoserine" evidence="6">
    <location>
        <position position="125"/>
    </location>
</feature>
<proteinExistence type="evidence at protein level"/>
<name>IMDH4_YEAST</name>
<protein>
    <recommendedName>
        <fullName evidence="1">Inosine-5'-monophosphate dehydrogenase 4</fullName>
        <shortName evidence="1">IMP dehydrogenase 4</shortName>
        <shortName evidence="1">IMPD 4</shortName>
        <shortName evidence="1">IMPDH 4</shortName>
        <ecNumber evidence="1">1.1.1.205</ecNumber>
    </recommendedName>
</protein>
<reference key="1">
    <citation type="journal article" date="1997" name="Nature">
        <title>The nucleotide sequence of Saccharomyces cerevisiae chromosome XIII.</title>
        <authorList>
            <person name="Bowman S."/>
            <person name="Churcher C.M."/>
            <person name="Badcock K."/>
            <person name="Brown D."/>
            <person name="Chillingworth T."/>
            <person name="Connor R."/>
            <person name="Dedman K."/>
            <person name="Devlin K."/>
            <person name="Gentles S."/>
            <person name="Hamlin N."/>
            <person name="Hunt S."/>
            <person name="Jagels K."/>
            <person name="Lye G."/>
            <person name="Moule S."/>
            <person name="Odell C."/>
            <person name="Pearson D."/>
            <person name="Rajandream M.A."/>
            <person name="Rice P."/>
            <person name="Skelton J."/>
            <person name="Walsh S.V."/>
            <person name="Whitehead S."/>
            <person name="Barrell B.G."/>
        </authorList>
    </citation>
    <scope>NUCLEOTIDE SEQUENCE [LARGE SCALE GENOMIC DNA]</scope>
    <source>
        <strain>ATCC 204508 / S288c</strain>
    </source>
</reference>
<reference key="2">
    <citation type="journal article" date="2014" name="G3 (Bethesda)">
        <title>The reference genome sequence of Saccharomyces cerevisiae: Then and now.</title>
        <authorList>
            <person name="Engel S.R."/>
            <person name="Dietrich F.S."/>
            <person name="Fisk D.G."/>
            <person name="Binkley G."/>
            <person name="Balakrishnan R."/>
            <person name="Costanzo M.C."/>
            <person name="Dwight S.S."/>
            <person name="Hitz B.C."/>
            <person name="Karra K."/>
            <person name="Nash R.S."/>
            <person name="Weng S."/>
            <person name="Wong E.D."/>
            <person name="Lloyd P."/>
            <person name="Skrzypek M.S."/>
            <person name="Miyasato S.R."/>
            <person name="Simison M."/>
            <person name="Cherry J.M."/>
        </authorList>
    </citation>
    <scope>GENOME REANNOTATION</scope>
    <source>
        <strain>ATCC 204508 / S288c</strain>
    </source>
</reference>
<reference key="3">
    <citation type="journal article" date="2005" name="Nucleic Acids Res.">
        <title>Mapping of transcription start sites in Saccharomyces cerevisiae using 5' SAGE.</title>
        <authorList>
            <person name="Zhang Z."/>
            <person name="Dietrich F.S."/>
        </authorList>
    </citation>
    <scope>NUCLEOTIDE SEQUENCE [MRNA] OF 1-83</scope>
    <source>
        <strain>ATCC 208353 / W303-1A</strain>
    </source>
</reference>
<reference key="4">
    <citation type="journal article" date="2003" name="Nature">
        <title>Global analysis of protein localization in budding yeast.</title>
        <authorList>
            <person name="Huh W.-K."/>
            <person name="Falvo J.V."/>
            <person name="Gerke L.C."/>
            <person name="Carroll A.S."/>
            <person name="Howson R.W."/>
            <person name="Weissman J.S."/>
            <person name="O'Shea E.K."/>
        </authorList>
    </citation>
    <scope>SUBCELLULAR LOCATION [LARGE SCALE ANALYSIS]</scope>
</reference>
<reference key="5">
    <citation type="journal article" date="2003" name="Nature">
        <title>Global analysis of protein expression in yeast.</title>
        <authorList>
            <person name="Ghaemmaghami S."/>
            <person name="Huh W.-K."/>
            <person name="Bower K."/>
            <person name="Howson R.W."/>
            <person name="Belle A."/>
            <person name="Dephoure N."/>
            <person name="O'Shea E.K."/>
            <person name="Weissman J.S."/>
        </authorList>
    </citation>
    <scope>LEVEL OF PROTEIN EXPRESSION [LARGE SCALE ANALYSIS]</scope>
</reference>
<reference key="6">
    <citation type="journal article" date="2003" name="J. Biol. Chem.">
        <title>Functional distinctions between IMP dehydrogenase genes in providing mycophenolate resistance and guanine prototrophy to yeast.</title>
        <authorList>
            <person name="Hyle J.W."/>
            <person name="Shaw R.J."/>
            <person name="Reines D."/>
        </authorList>
    </citation>
    <scope>FUNCTION</scope>
</reference>
<reference key="7">
    <citation type="journal article" date="2004" name="Proc. Natl. Acad. Sci. U.S.A.">
        <title>Detection of the mycophenolate-inhibited form of IMP dehydrogenase in vivo.</title>
        <authorList>
            <person name="McPhillips C.C."/>
            <person name="Hyle J.W."/>
            <person name="Reines D."/>
        </authorList>
    </citation>
    <scope>FUNCTION</scope>
    <scope>SUBUNIT</scope>
</reference>
<reference key="8">
    <citation type="journal article" date="2008" name="Mol. Cell. Proteomics">
        <title>A multidimensional chromatography technology for in-depth phosphoproteome analysis.</title>
        <authorList>
            <person name="Albuquerque C.P."/>
            <person name="Smolka M.B."/>
            <person name="Payne S.H."/>
            <person name="Bafna V."/>
            <person name="Eng J."/>
            <person name="Zhou H."/>
        </authorList>
    </citation>
    <scope>PHOSPHORYLATION [LARGE SCALE ANALYSIS] AT SER-125</scope>
    <scope>IDENTIFICATION BY MASS SPECTROMETRY [LARGE SCALE ANALYSIS]</scope>
</reference>
<comment type="function">
    <text evidence="1 2 5">Catalyzes the conversion of inosine 5'-phosphate (IMP) to xanthosine 5'-phosphate (XMP), the first committed and rate-limiting step in the de novo synthesis of guanine nucleotides, and therefore plays an important role in the regulation of cell growth.</text>
</comment>
<comment type="catalytic activity">
    <reaction evidence="1">
        <text>IMP + NAD(+) + H2O = XMP + NADH + H(+)</text>
        <dbReference type="Rhea" id="RHEA:11708"/>
        <dbReference type="ChEBI" id="CHEBI:15377"/>
        <dbReference type="ChEBI" id="CHEBI:15378"/>
        <dbReference type="ChEBI" id="CHEBI:57464"/>
        <dbReference type="ChEBI" id="CHEBI:57540"/>
        <dbReference type="ChEBI" id="CHEBI:57945"/>
        <dbReference type="ChEBI" id="CHEBI:58053"/>
        <dbReference type="EC" id="1.1.1.205"/>
    </reaction>
</comment>
<comment type="cofactor">
    <cofactor evidence="1">
        <name>K(+)</name>
        <dbReference type="ChEBI" id="CHEBI:29103"/>
    </cofactor>
</comment>
<comment type="activity regulation">
    <text evidence="1">Mycophenolic acid (MPA) is a non-competitive inhibitor that prevents formation of the closed enzyme conformation by binding to the same site as the amobile flap. In contrast, mizoribine monophosphate (MZP) is a competitive inhibitor that induces the closed conformation. MPA is a potent inhibitor of mammalian IMPDHs but a poor inhibitor of the bacterial enzymes. MZP is a more potent inhibitor of bacterial IMPDH.</text>
</comment>
<comment type="pathway">
    <text evidence="1">Purine metabolism; XMP biosynthesis via de novo pathway; XMP from IMP: step 1/1.</text>
</comment>
<comment type="subunit">
    <text evidence="1 5">Homotetramer. Seems to be able to form heterotetramers composed from more than 1 of the 3 IMPDH gene products (IMD2-4).</text>
</comment>
<comment type="interaction">
    <interactant intactId="EBI-9195">
        <id>P50094</id>
    </interactant>
    <interactant intactId="EBI-9190">
        <id>P50095</id>
        <label>IMD3</label>
    </interactant>
    <organismsDiffer>false</organismsDiffer>
    <experiments>9</experiments>
</comment>
<comment type="subcellular location">
    <subcellularLocation>
        <location evidence="1 3">Cytoplasm</location>
    </subcellularLocation>
</comment>
<comment type="miscellaneous">
    <text evidence="4">Present with 2970 molecules/cell in log phase SD medium.</text>
</comment>
<comment type="similarity">
    <text evidence="1">Belongs to the IMPDH/GMPR family.</text>
</comment>
<keyword id="KW-0129">CBS domain</keyword>
<keyword id="KW-0963">Cytoplasm</keyword>
<keyword id="KW-0332">GMP biosynthesis</keyword>
<keyword id="KW-0479">Metal-binding</keyword>
<keyword id="KW-0520">NAD</keyword>
<keyword id="KW-0560">Oxidoreductase</keyword>
<keyword id="KW-0597">Phosphoprotein</keyword>
<keyword id="KW-0630">Potassium</keyword>
<keyword id="KW-0658">Purine biosynthesis</keyword>
<keyword id="KW-1185">Reference proteome</keyword>
<keyword id="KW-0677">Repeat</keyword>
<accession>P50094</accession>
<accession>D6VZB8</accession>
<accession>Q2VQW8</accession>